<dbReference type="EMBL" id="CP001291">
    <property type="protein sequence ID" value="ACK71499.1"/>
    <property type="molecule type" value="Genomic_DNA"/>
</dbReference>
<dbReference type="RefSeq" id="WP_015955096.1">
    <property type="nucleotide sequence ID" value="NC_011729.1"/>
</dbReference>
<dbReference type="STRING" id="65393.PCC7424_3097"/>
<dbReference type="KEGG" id="cyc:PCC7424_3097"/>
<dbReference type="eggNOG" id="COG0267">
    <property type="taxonomic scope" value="Bacteria"/>
</dbReference>
<dbReference type="HOGENOM" id="CLU_190949_3_0_3"/>
<dbReference type="OrthoDB" id="9801333at2"/>
<dbReference type="Proteomes" id="UP000002384">
    <property type="component" value="Chromosome"/>
</dbReference>
<dbReference type="GO" id="GO:0005737">
    <property type="term" value="C:cytoplasm"/>
    <property type="evidence" value="ECO:0007669"/>
    <property type="project" value="UniProtKB-ARBA"/>
</dbReference>
<dbReference type="GO" id="GO:1990904">
    <property type="term" value="C:ribonucleoprotein complex"/>
    <property type="evidence" value="ECO:0007669"/>
    <property type="project" value="UniProtKB-KW"/>
</dbReference>
<dbReference type="GO" id="GO:0005840">
    <property type="term" value="C:ribosome"/>
    <property type="evidence" value="ECO:0007669"/>
    <property type="project" value="UniProtKB-KW"/>
</dbReference>
<dbReference type="GO" id="GO:0003735">
    <property type="term" value="F:structural constituent of ribosome"/>
    <property type="evidence" value="ECO:0007669"/>
    <property type="project" value="InterPro"/>
</dbReference>
<dbReference type="GO" id="GO:0006412">
    <property type="term" value="P:translation"/>
    <property type="evidence" value="ECO:0007669"/>
    <property type="project" value="UniProtKB-UniRule"/>
</dbReference>
<dbReference type="Gene3D" id="2.20.28.120">
    <property type="entry name" value="Ribosomal protein L33"/>
    <property type="match status" value="1"/>
</dbReference>
<dbReference type="HAMAP" id="MF_00294">
    <property type="entry name" value="Ribosomal_bL33"/>
    <property type="match status" value="1"/>
</dbReference>
<dbReference type="InterPro" id="IPR001705">
    <property type="entry name" value="Ribosomal_bL33"/>
</dbReference>
<dbReference type="InterPro" id="IPR018264">
    <property type="entry name" value="Ribosomal_bL33_CS"/>
</dbReference>
<dbReference type="InterPro" id="IPR038584">
    <property type="entry name" value="Ribosomal_bL33_sf"/>
</dbReference>
<dbReference type="InterPro" id="IPR011332">
    <property type="entry name" value="Ribosomal_zn-bd"/>
</dbReference>
<dbReference type="NCBIfam" id="NF001764">
    <property type="entry name" value="PRK00504.1"/>
    <property type="match status" value="1"/>
</dbReference>
<dbReference type="NCBIfam" id="NF001860">
    <property type="entry name" value="PRK00595.1"/>
    <property type="match status" value="1"/>
</dbReference>
<dbReference type="NCBIfam" id="TIGR01023">
    <property type="entry name" value="rpmG_bact"/>
    <property type="match status" value="1"/>
</dbReference>
<dbReference type="PANTHER" id="PTHR43168">
    <property type="entry name" value="50S RIBOSOMAL PROTEIN L33, CHLOROPLASTIC"/>
    <property type="match status" value="1"/>
</dbReference>
<dbReference type="PANTHER" id="PTHR43168:SF2">
    <property type="entry name" value="LARGE RIBOSOMAL SUBUNIT PROTEIN BL33C"/>
    <property type="match status" value="1"/>
</dbReference>
<dbReference type="Pfam" id="PF00471">
    <property type="entry name" value="Ribosomal_L33"/>
    <property type="match status" value="1"/>
</dbReference>
<dbReference type="SUPFAM" id="SSF57829">
    <property type="entry name" value="Zn-binding ribosomal proteins"/>
    <property type="match status" value="1"/>
</dbReference>
<dbReference type="PROSITE" id="PS00582">
    <property type="entry name" value="RIBOSOMAL_L33"/>
    <property type="match status" value="1"/>
</dbReference>
<keyword id="KW-1185">Reference proteome</keyword>
<keyword id="KW-0687">Ribonucleoprotein</keyword>
<keyword id="KW-0689">Ribosomal protein</keyword>
<sequence length="64" mass="7363">MASKKGVRLIITLECTECRSNPDKRSAGVSRYTTSKNRRNTTGRLELKKFCTHCNKHTVHKEIK</sequence>
<comment type="similarity">
    <text evidence="1">Belongs to the bacterial ribosomal protein bL33 family.</text>
</comment>
<organism>
    <name type="scientific">Gloeothece citriformis (strain PCC 7424)</name>
    <name type="common">Cyanothece sp. (strain PCC 7424)</name>
    <dbReference type="NCBI Taxonomy" id="65393"/>
    <lineage>
        <taxon>Bacteria</taxon>
        <taxon>Bacillati</taxon>
        <taxon>Cyanobacteriota</taxon>
        <taxon>Cyanophyceae</taxon>
        <taxon>Oscillatoriophycideae</taxon>
        <taxon>Chroococcales</taxon>
        <taxon>Aphanothecaceae</taxon>
        <taxon>Gloeothece</taxon>
        <taxon>Gloeothece citriformis</taxon>
    </lineage>
</organism>
<accession>B7KBE3</accession>
<reference key="1">
    <citation type="journal article" date="2011" name="MBio">
        <title>Novel metabolic attributes of the genus Cyanothece, comprising a group of unicellular nitrogen-fixing Cyanobacteria.</title>
        <authorList>
            <person name="Bandyopadhyay A."/>
            <person name="Elvitigala T."/>
            <person name="Welsh E."/>
            <person name="Stockel J."/>
            <person name="Liberton M."/>
            <person name="Min H."/>
            <person name="Sherman L.A."/>
            <person name="Pakrasi H.B."/>
        </authorList>
    </citation>
    <scope>NUCLEOTIDE SEQUENCE [LARGE SCALE GENOMIC DNA]</scope>
    <source>
        <strain>PCC 7424</strain>
    </source>
</reference>
<name>RL33_GLOC7</name>
<proteinExistence type="inferred from homology"/>
<gene>
    <name evidence="1" type="primary">rpmG</name>
    <name evidence="1" type="synonym">rpl33</name>
    <name type="ordered locus">PCC7424_3097</name>
</gene>
<evidence type="ECO:0000255" key="1">
    <source>
        <dbReference type="HAMAP-Rule" id="MF_00294"/>
    </source>
</evidence>
<evidence type="ECO:0000305" key="2"/>
<protein>
    <recommendedName>
        <fullName evidence="1">Large ribosomal subunit protein bL33</fullName>
    </recommendedName>
    <alternativeName>
        <fullName evidence="2">50S ribosomal protein L33</fullName>
    </alternativeName>
</protein>
<feature type="chain" id="PRO_1000119435" description="Large ribosomal subunit protein bL33">
    <location>
        <begin position="1"/>
        <end position="64"/>
    </location>
</feature>